<organism>
    <name type="scientific">Hyaloperonospora arabidopsidis (strain Emoy2)</name>
    <name type="common">Downy mildew agent</name>
    <name type="synonym">Peronospora arabidopsidis</name>
    <dbReference type="NCBI Taxonomy" id="559515"/>
    <lineage>
        <taxon>Eukaryota</taxon>
        <taxon>Sar</taxon>
        <taxon>Stramenopiles</taxon>
        <taxon>Oomycota</taxon>
        <taxon>Peronosporales</taxon>
        <taxon>Peronosporaceae</taxon>
        <taxon>Hyaloperonospora</taxon>
    </lineage>
</organism>
<reference key="1">
    <citation type="journal article" date="2010" name="Science">
        <title>Signatures of adaptation to obligate biotrophy in the Hyaloperonospora arabidopsidis genome.</title>
        <authorList>
            <person name="Baxter L."/>
            <person name="Tripathy S."/>
            <person name="Ishaque N."/>
            <person name="Boot N."/>
            <person name="Cabral A."/>
            <person name="Kemen E."/>
            <person name="Thines M."/>
            <person name="Ah-Fong A."/>
            <person name="Anderson R."/>
            <person name="Badejoko W."/>
            <person name="Bittner-Eddy P."/>
            <person name="Boore J.L."/>
            <person name="Chibucos M.C."/>
            <person name="Coates M."/>
            <person name="Dehal P."/>
            <person name="Delehaunty K."/>
            <person name="Dong S."/>
            <person name="Downton P."/>
            <person name="Dumas B."/>
            <person name="Fabro G."/>
            <person name="Fronick C."/>
            <person name="Fuerstenberg S.I."/>
            <person name="Fulton L."/>
            <person name="Gaulin E."/>
            <person name="Govers F."/>
            <person name="Hughes L."/>
            <person name="Humphray S."/>
            <person name="Jiang R.H."/>
            <person name="Judelson H."/>
            <person name="Kamoun S."/>
            <person name="Kyung K."/>
            <person name="Meijer H."/>
            <person name="Minx P."/>
            <person name="Morris P."/>
            <person name="Nelson J."/>
            <person name="Phuntumart V."/>
            <person name="Qutob D."/>
            <person name="Rehmany A."/>
            <person name="Rougon-Cardoso A."/>
            <person name="Ryden P."/>
            <person name="Torto-Alalibo T."/>
            <person name="Studholme D."/>
            <person name="Wang Y."/>
            <person name="Win J."/>
            <person name="Wood J."/>
            <person name="Clifton S.W."/>
            <person name="Rogers J."/>
            <person name="Van den Ackerveken G."/>
            <person name="Jones J.D."/>
            <person name="McDowell J.M."/>
            <person name="Beynon J."/>
            <person name="Tyler B.M."/>
        </authorList>
    </citation>
    <scope>NUCLEOTIDE SEQUENCE [LARGE SCALE GENOMIC DNA]</scope>
    <source>
        <strain>Emoy2</strain>
    </source>
</reference>
<reference key="2">
    <citation type="submission" date="2015-06" db="UniProtKB">
        <authorList>
            <consortium name="EnsemblProtists"/>
        </authorList>
    </citation>
    <scope>IDENTIFICATION</scope>
    <source>
        <strain>Emoy2</strain>
    </source>
</reference>
<reference key="3">
    <citation type="journal article" date="2011" name="PLoS Pathog.">
        <title>Multiple candidate effectors from the oomycete pathogen Hyaloperonospora arabidopsidis suppress host plant immunity.</title>
        <authorList>
            <person name="Fabro G."/>
            <person name="Steinbrenner J."/>
            <person name="Coates M."/>
            <person name="Ishaque N."/>
            <person name="Baxter L."/>
            <person name="Studholme D.J."/>
            <person name="Koerner E."/>
            <person name="Allen R.L."/>
            <person name="Piquerez S.J."/>
            <person name="Rougon-Cardoso A."/>
            <person name="Greenshields D."/>
            <person name="Lei R."/>
            <person name="Badel J.L."/>
            <person name="Caillaud M.C."/>
            <person name="Sohn K.H."/>
            <person name="Van den Ackerveken G."/>
            <person name="Parker J.E."/>
            <person name="Beynon J."/>
            <person name="Jones J.D."/>
        </authorList>
    </citation>
    <scope>NUCLEOTIDE SEQUENCE [MRNA] OF 25-285</scope>
    <scope>FUNCTION</scope>
    <scope>DOMAIN</scope>
    <source>
        <strain>Emoy2</strain>
    </source>
</reference>
<reference key="4">
    <citation type="journal article" date="2015" name="Plant J.">
        <title>Probing formation of cargo/importin-alpha transport complexes in plant cells using a pathogen effector.</title>
        <authorList>
            <person name="Wirthmueller L."/>
            <person name="Roth C."/>
            <person name="Fabro G."/>
            <person name="Caillaud M.C."/>
            <person name="Rallapalli G."/>
            <person name="Asai S."/>
            <person name="Sklenar J."/>
            <person name="Jones A.M."/>
            <person name="Wiermer M."/>
            <person name="Jones J.D."/>
            <person name="Banfield M.J."/>
        </authorList>
    </citation>
    <scope>DOMAIN</scope>
    <scope>SUBCELLULAR LOCATION</scope>
</reference>
<reference key="5">
    <citation type="journal article" date="2018" name="New Phytol.">
        <title>Arabidopsis downy mildew effector HaRxL106 suppresses plant immunity by binding to RADICAL-INDUCED CELL DEATH1.</title>
        <authorList>
            <person name="Wirthmueller L."/>
            <person name="Asai S."/>
            <person name="Rallapalli G."/>
            <person name="Sklenar J."/>
            <person name="Fabro G."/>
            <person name="Kim D.S."/>
            <person name="Lintermann R."/>
            <person name="Jaspers P."/>
            <person name="Wrzaczek M."/>
            <person name="Kangasjaervi J."/>
            <person name="MacLean D."/>
            <person name="Menke F.L.H."/>
            <person name="Banfield M.J."/>
            <person name="Jones J.D.G."/>
        </authorList>
    </citation>
    <scope>FUNCTION</scope>
    <scope>INTERACTION WITH HOST RDC1 AND SRO1</scope>
    <scope>DOMAIN</scope>
</reference>
<gene>
    <name evidence="7" type="primary">RXL106</name>
</gene>
<protein>
    <recommendedName>
        <fullName evidence="7">Secreted RxLR effector protein 106</fullName>
    </recommendedName>
</protein>
<evidence type="ECO:0000255" key="1"/>
<evidence type="ECO:0000255" key="2">
    <source>
        <dbReference type="PROSITE-ProRule" id="PRU00498"/>
    </source>
</evidence>
<evidence type="ECO:0000256" key="3">
    <source>
        <dbReference type="SAM" id="MobiDB-lite"/>
    </source>
</evidence>
<evidence type="ECO:0000269" key="4">
    <source>
    </source>
</evidence>
<evidence type="ECO:0000269" key="5">
    <source>
    </source>
</evidence>
<evidence type="ECO:0000269" key="6">
    <source>
    </source>
</evidence>
<evidence type="ECO:0000303" key="7">
    <source>
    </source>
</evidence>
<evidence type="ECO:0000305" key="8"/>
<evidence type="ECO:0000305" key="9">
    <source>
    </source>
</evidence>
<dbReference type="EMBL" id="JH598250">
    <property type="status" value="NOT_ANNOTATED_CDS"/>
    <property type="molecule type" value="Genomic_DNA"/>
</dbReference>
<dbReference type="EMBL" id="HE574762">
    <property type="protein sequence ID" value="CCC55840.1"/>
    <property type="molecule type" value="mRNA"/>
</dbReference>
<dbReference type="SMR" id="M4C4U1"/>
<dbReference type="IntAct" id="M4C4U1">
    <property type="interactions" value="1"/>
</dbReference>
<dbReference type="GlyCosmos" id="M4C4U1">
    <property type="glycosylation" value="2 sites, No reported glycans"/>
</dbReference>
<dbReference type="EnsemblProtists" id="HpaT814111">
    <property type="protein sequence ID" value="HpaP814111"/>
    <property type="gene ID" value="HpaG814111"/>
</dbReference>
<dbReference type="VEuPathDB" id="FungiDB:HpaG814111"/>
<dbReference type="HOGENOM" id="CLU_978105_0_0_1"/>
<dbReference type="InParanoid" id="M4C4U1"/>
<dbReference type="PHI-base" id="PHI:4258"/>
<dbReference type="PHI-base" id="PHI:4765"/>
<dbReference type="PHI-base" id="PHI:4857"/>
<dbReference type="Proteomes" id="UP000011713">
    <property type="component" value="Unassembled WGS sequence"/>
</dbReference>
<dbReference type="GO" id="GO:0005576">
    <property type="term" value="C:extracellular region"/>
    <property type="evidence" value="ECO:0007669"/>
    <property type="project" value="UniProtKB-SubCell"/>
</dbReference>
<dbReference type="GO" id="GO:0042025">
    <property type="term" value="C:host cell nucleus"/>
    <property type="evidence" value="ECO:0007669"/>
    <property type="project" value="UniProtKB-SubCell"/>
</dbReference>
<feature type="signal peptide" evidence="1">
    <location>
        <begin position="1"/>
        <end position="24"/>
    </location>
</feature>
<feature type="chain" id="PRO_5004049395" description="Secreted RxLR effector protein 106" evidence="1">
    <location>
        <begin position="25"/>
        <end position="285"/>
    </location>
</feature>
<feature type="region of interest" description="Disordered" evidence="3">
    <location>
        <begin position="220"/>
        <end position="262"/>
    </location>
</feature>
<feature type="short sequence motif" description="RxLR-dEER" evidence="9">
    <location>
        <begin position="42"/>
        <end position="54"/>
    </location>
</feature>
<feature type="short sequence motif" description="Bipartite nuclear localization signal" evidence="5">
    <location>
        <begin position="239"/>
        <end position="264"/>
    </location>
</feature>
<feature type="compositionally biased region" description="Basic and acidic residues" evidence="3">
    <location>
        <begin position="220"/>
        <end position="229"/>
    </location>
</feature>
<feature type="glycosylation site" description="N-linked (GlcNAc...) asparagine" evidence="2">
    <location>
        <position position="182"/>
    </location>
</feature>
<feature type="glycosylation site" description="N-linked (GlcNAc...) asparagine" evidence="2">
    <location>
        <position position="187"/>
    </location>
</feature>
<sequence length="285" mass="32073">MSVRYAGLLLAAVAVSAHINEVNSIVFPGSLHIDNRNGHVQRDLRSADNGNEERNAILETLSNHLASAFGYLWTKEAQEMTNSAWSALRNKESSLPLYSEGVAREYIETAALNTLTAEHRLARAEAYMVSMIVALRGVENPESLRNSADNLQQFLINVWKTGKKQPAQVFELLEHVPYEEGNASLVNDSKFAIWMAYMGKTFDHQFKNWADVQHNEQLRIEGDKEKKGGPDYVEGTESRGKKRGQTEAPDLEPGLTPKQKRLKRMELQRVKKILLNINLMGIGRS</sequence>
<proteinExistence type="evidence at protein level"/>
<accession>M4C4U1</accession>
<accession>G3C9R4</accession>
<keyword id="KW-0325">Glycoprotein</keyword>
<keyword id="KW-1048">Host nucleus</keyword>
<keyword id="KW-1185">Reference proteome</keyword>
<keyword id="KW-0964">Secreted</keyword>
<keyword id="KW-0732">Signal</keyword>
<name>RX106_HYAAE</name>
<comment type="function">
    <text evidence="4 6">Secreted effector that suppresses pathogen-associated molecular pattern (PAMP)-triggered immunity (PTI) in host plants (PubMed:22072967, PubMed:30156022). Binds to RCD1 and SRO1 transcription co-regulators to attenuate transcriptional activation of salicylic acid (SA)-induced defense genes and alters plant growth responses to light (PubMed:30156022). Suppresses SA signal transduction but not SA levels (PubMed:30156022).</text>
</comment>
<comment type="subunit">
    <text evidence="6">Interacts with host RCD1 and SRO1 transcription co-regulators.</text>
</comment>
<comment type="subcellular location">
    <subcellularLocation>
        <location evidence="4">Secreted</location>
    </subcellularLocation>
    <subcellularLocation>
        <location evidence="5">Host nucleus</location>
    </subcellularLocation>
    <text evidence="5">Co-opts the host cell's nuclear import system via its bipartite nuclear localization signal.</text>
</comment>
<comment type="domain">
    <text evidence="9">Has the canonical translocation RxLR motif, but lacks the canonical EER motif, which characterizes most oomycete effectors identified so far.</text>
</comment>
<comment type="domain">
    <text evidence="6">The C-terminal 58 amino acids (residues 228-285) are required for RCD1-binding and attenuation of light and defense signaling.</text>
</comment>
<comment type="similarity">
    <text evidence="8">Belongs to the RxLR effector family.</text>
</comment>